<accession>Q4R532</accession>
<comment type="function">
    <text evidence="1">May regulate AMPA receptor content at nascent synapses, and have a role in postsynaptic development and maturation.</text>
</comment>
<comment type="subunit">
    <text evidence="1">Homodimer. Interacts with GRIA1 and GRIA2 (By similarity).</text>
</comment>
<comment type="subcellular location">
    <subcellularLocation>
        <location>Cell membrane</location>
        <topology>Single-pass type II membrane protein</topology>
    </subcellularLocation>
    <subcellularLocation>
        <location evidence="1">Early endosome membrane</location>
        <topology evidence="1">Single-pass type II membrane protein</topology>
    </subcellularLocation>
    <subcellularLocation>
        <location evidence="1">Postsynaptic density membrane</location>
    </subcellularLocation>
    <subcellularLocation>
        <location evidence="1">Synapse</location>
    </subcellularLocation>
    <subcellularLocation>
        <location evidence="1">Cell projection</location>
        <location evidence="1">Dendrite</location>
    </subcellularLocation>
    <subcellularLocation>
        <location evidence="1">Cell projection</location>
        <location evidence="1">Dendritic spine</location>
    </subcellularLocation>
    <text evidence="1">Shuttles between the cell surface and early endosome membrane.</text>
</comment>
<comment type="similarity">
    <text evidence="4">Belongs to the CD225/Dispanin family.</text>
</comment>
<organism>
    <name type="scientific">Macaca fascicularis</name>
    <name type="common">Crab-eating macaque</name>
    <name type="synonym">Cynomolgus monkey</name>
    <dbReference type="NCBI Taxonomy" id="9541"/>
    <lineage>
        <taxon>Eukaryota</taxon>
        <taxon>Metazoa</taxon>
        <taxon>Chordata</taxon>
        <taxon>Craniata</taxon>
        <taxon>Vertebrata</taxon>
        <taxon>Euteleostomi</taxon>
        <taxon>Mammalia</taxon>
        <taxon>Eutheria</taxon>
        <taxon>Euarchontoglires</taxon>
        <taxon>Primates</taxon>
        <taxon>Haplorrhini</taxon>
        <taxon>Catarrhini</taxon>
        <taxon>Cercopithecidae</taxon>
        <taxon>Cercopithecinae</taxon>
        <taxon>Macaca</taxon>
    </lineage>
</organism>
<feature type="chain" id="PRO_0000249457" description="Synapse differentiation-inducing gene protein 1">
    <location>
        <begin position="1"/>
        <end position="258"/>
    </location>
</feature>
<feature type="topological domain" description="Cytoplasmic" evidence="3">
    <location>
        <begin position="1"/>
        <end position="181"/>
    </location>
</feature>
<feature type="transmembrane region" description="Helical" evidence="3">
    <location>
        <begin position="182"/>
        <end position="202"/>
    </location>
</feature>
<feature type="topological domain" description="Extracellular" evidence="3">
    <location>
        <begin position="203"/>
        <end position="228"/>
    </location>
</feature>
<feature type="intramembrane region" description="Helical" evidence="3">
    <location>
        <begin position="229"/>
        <end position="249"/>
    </location>
</feature>
<feature type="topological domain" description="Extracellular" evidence="3">
    <location>
        <begin position="250"/>
        <end position="258"/>
    </location>
</feature>
<feature type="modified residue" description="Phosphoserine" evidence="2">
    <location>
        <position position="137"/>
    </location>
</feature>
<name>SYNG1_MACFA</name>
<evidence type="ECO:0000250" key="1"/>
<evidence type="ECO:0000250" key="2">
    <source>
        <dbReference type="UniProtKB" id="Q58DZ9"/>
    </source>
</evidence>
<evidence type="ECO:0000255" key="3"/>
<evidence type="ECO:0000305" key="4"/>
<keyword id="KW-1003">Cell membrane</keyword>
<keyword id="KW-0966">Cell projection</keyword>
<keyword id="KW-0967">Endosome</keyword>
<keyword id="KW-0472">Membrane</keyword>
<keyword id="KW-0597">Phosphoprotein</keyword>
<keyword id="KW-0628">Postsynaptic cell membrane</keyword>
<keyword id="KW-1185">Reference proteome</keyword>
<keyword id="KW-0735">Signal-anchor</keyword>
<keyword id="KW-0770">Synapse</keyword>
<keyword id="KW-0812">Transmembrane</keyword>
<keyword id="KW-1133">Transmembrane helix</keyword>
<gene>
    <name type="primary">SYNDIG1</name>
    <name type="synonym">TMEM90B</name>
    <name type="ORF">QccE-21894</name>
</gene>
<protein>
    <recommendedName>
        <fullName>Synapse differentiation-inducing gene protein 1</fullName>
        <shortName>SynDIG1</shortName>
    </recommendedName>
    <alternativeName>
        <fullName>Dispanin subfamily C member 2</fullName>
        <shortName>DSPC2</shortName>
    </alternativeName>
    <alternativeName>
        <fullName>Transmembrane protein 90B</fullName>
    </alternativeName>
</protein>
<sequence length="258" mass="28579">MDGIIEQKSMLVHSKISDAGKRNGLINTRNLMAESRDGLVSVYPAPQYQSHRVGASTVPASLDSSRSEPVQQLLDPNTLQQSVESRYRPNIILYSEGVLRSWGDGVTTDCCETTFIEDRSPTKDSLEYPDGKFIDLSADDIKIHTLSYDVEEEEEFQELESDYSSDTESEDNFLMMPPRDHLGLSVFSMLCCFWPLGIAAFYLSHETNKAVAKGDLHQASTSSRRALFLAVLSITIGTGVYVGVAVALIAYLSKNNHL</sequence>
<proteinExistence type="evidence at transcript level"/>
<reference key="1">
    <citation type="submission" date="2005-06" db="EMBL/GenBank/DDBJ databases">
        <title>DNA sequences of macaque genes expressed in brain or testis and its evolutionary implications.</title>
        <authorList>
            <consortium name="International consortium for macaque cDNA sequencing and analysis"/>
        </authorList>
    </citation>
    <scope>NUCLEOTIDE SEQUENCE [LARGE SCALE MRNA]</scope>
    <source>
        <tissue>Brain cortex</tissue>
    </source>
</reference>
<reference key="2">
    <citation type="journal article" date="2012" name="PLoS ONE">
        <title>The dispanins: a novel gene family of ancient origin that contains 14 human members.</title>
        <authorList>
            <person name="Sallman Almen M."/>
            <person name="Bringeland N."/>
            <person name="Fredriksson R."/>
            <person name="Schioth H.B."/>
        </authorList>
    </citation>
    <scope>GENE FAMILY</scope>
</reference>
<dbReference type="EMBL" id="AB169712">
    <property type="protein sequence ID" value="BAE01793.1"/>
    <property type="molecule type" value="mRNA"/>
</dbReference>
<dbReference type="RefSeq" id="XP_015313103.1">
    <property type="nucleotide sequence ID" value="XM_015457617.3"/>
</dbReference>
<dbReference type="RefSeq" id="XP_015313104.1">
    <property type="nucleotide sequence ID" value="XM_015457618.1"/>
</dbReference>
<dbReference type="RefSeq" id="XP_015313105.1">
    <property type="nucleotide sequence ID" value="XM_015457619.1"/>
</dbReference>
<dbReference type="RefSeq" id="XP_015313106.1">
    <property type="nucleotide sequence ID" value="XM_015457620.1"/>
</dbReference>
<dbReference type="RefSeq" id="XP_015313107.1">
    <property type="nucleotide sequence ID" value="XM_015457621.3"/>
</dbReference>
<dbReference type="RefSeq" id="XP_015313108.1">
    <property type="nucleotide sequence ID" value="XM_015457622.3"/>
</dbReference>
<dbReference type="RefSeq" id="XP_015313109.1">
    <property type="nucleotide sequence ID" value="XM_015457623.3"/>
</dbReference>
<dbReference type="RefSeq" id="XP_015313110.1">
    <property type="nucleotide sequence ID" value="XM_015457624.3"/>
</dbReference>
<dbReference type="RefSeq" id="XP_065378756.1">
    <property type="nucleotide sequence ID" value="XM_065522684.1"/>
</dbReference>
<dbReference type="RefSeq" id="XP_065378757.1">
    <property type="nucleotide sequence ID" value="XM_065522685.1"/>
</dbReference>
<dbReference type="RefSeq" id="XP_065378758.1">
    <property type="nucleotide sequence ID" value="XM_065522686.1"/>
</dbReference>
<dbReference type="SMR" id="Q4R532"/>
<dbReference type="STRING" id="9541.ENSMFAP00000004327"/>
<dbReference type="Ensembl" id="ENSMFAT00000074678.1">
    <property type="protein sequence ID" value="ENSMFAP00000064045.1"/>
    <property type="gene ID" value="ENSMFAG00000052498.1"/>
</dbReference>
<dbReference type="GeneID" id="101864992"/>
<dbReference type="CTD" id="79953"/>
<dbReference type="VEuPathDB" id="HostDB:ENSMFAG00000001861"/>
<dbReference type="eggNOG" id="ENOG502QQXK">
    <property type="taxonomic scope" value="Eukaryota"/>
</dbReference>
<dbReference type="GeneTree" id="ENSGT00950000183147"/>
<dbReference type="OMA" id="SWGDGMA"/>
<dbReference type="OrthoDB" id="8814at314294"/>
<dbReference type="Proteomes" id="UP000233100">
    <property type="component" value="Chromosome 10"/>
</dbReference>
<dbReference type="GO" id="GO:0044297">
    <property type="term" value="C:cell body"/>
    <property type="evidence" value="ECO:0000250"/>
    <property type="project" value="UniProtKB"/>
</dbReference>
<dbReference type="GO" id="GO:0043198">
    <property type="term" value="C:dendritic shaft"/>
    <property type="evidence" value="ECO:0000250"/>
    <property type="project" value="UniProtKB"/>
</dbReference>
<dbReference type="GO" id="GO:0043197">
    <property type="term" value="C:dendritic spine"/>
    <property type="evidence" value="ECO:0000250"/>
    <property type="project" value="UniProtKB"/>
</dbReference>
<dbReference type="GO" id="GO:0031901">
    <property type="term" value="C:early endosome membrane"/>
    <property type="evidence" value="ECO:0000250"/>
    <property type="project" value="UniProtKB"/>
</dbReference>
<dbReference type="GO" id="GO:0060076">
    <property type="term" value="C:excitatory synapse"/>
    <property type="evidence" value="ECO:0000250"/>
    <property type="project" value="UniProtKB"/>
</dbReference>
<dbReference type="GO" id="GO:0005886">
    <property type="term" value="C:plasma membrane"/>
    <property type="evidence" value="ECO:0000250"/>
    <property type="project" value="UniProtKB"/>
</dbReference>
<dbReference type="GO" id="GO:0014069">
    <property type="term" value="C:postsynaptic density"/>
    <property type="evidence" value="ECO:0000250"/>
    <property type="project" value="UniProtKB"/>
</dbReference>
<dbReference type="GO" id="GO:0098839">
    <property type="term" value="C:postsynaptic density membrane"/>
    <property type="evidence" value="ECO:0007669"/>
    <property type="project" value="UniProtKB-SubCell"/>
</dbReference>
<dbReference type="GO" id="GO:0030672">
    <property type="term" value="C:synaptic vesicle membrane"/>
    <property type="evidence" value="ECO:0007669"/>
    <property type="project" value="TreeGrafter"/>
</dbReference>
<dbReference type="GO" id="GO:0035254">
    <property type="term" value="F:glutamate receptor binding"/>
    <property type="evidence" value="ECO:0000250"/>
    <property type="project" value="UniProtKB"/>
</dbReference>
<dbReference type="GO" id="GO:0042803">
    <property type="term" value="F:protein homodimerization activity"/>
    <property type="evidence" value="ECO:0000250"/>
    <property type="project" value="UniProtKB"/>
</dbReference>
<dbReference type="GO" id="GO:0006886">
    <property type="term" value="P:intracellular protein transport"/>
    <property type="evidence" value="ECO:0000250"/>
    <property type="project" value="UniProtKB"/>
</dbReference>
<dbReference type="GO" id="GO:0051965">
    <property type="term" value="P:positive regulation of synapse assembly"/>
    <property type="evidence" value="ECO:0000250"/>
    <property type="project" value="UniProtKB"/>
</dbReference>
<dbReference type="GO" id="GO:0097091">
    <property type="term" value="P:synaptic vesicle clustering"/>
    <property type="evidence" value="ECO:0000250"/>
    <property type="project" value="UniProtKB"/>
</dbReference>
<dbReference type="InterPro" id="IPR007593">
    <property type="entry name" value="CD225/Dispanin_fam"/>
</dbReference>
<dbReference type="PANTHER" id="PTHR14768:SF3">
    <property type="entry name" value="SYNAPSE DIFFERENTIATION-INDUCING GENE PROTEIN 1"/>
    <property type="match status" value="1"/>
</dbReference>
<dbReference type="PANTHER" id="PTHR14768">
    <property type="entry name" value="UPF0338 PROTEIN"/>
    <property type="match status" value="1"/>
</dbReference>
<dbReference type="Pfam" id="PF04505">
    <property type="entry name" value="CD225"/>
    <property type="match status" value="1"/>
</dbReference>